<name>YDGJ_BACSU</name>
<feature type="chain" id="PRO_0000054401" description="Uncharacterized HTH-type transcriptional regulator YdgJ">
    <location>
        <begin position="1"/>
        <end position="164"/>
    </location>
</feature>
<feature type="domain" description="HTH marR-type" evidence="1">
    <location>
        <begin position="28"/>
        <end position="157"/>
    </location>
</feature>
<feature type="DNA-binding region" description="H-T-H motif" evidence="1">
    <location>
        <begin position="71"/>
        <end position="94"/>
    </location>
</feature>
<organism>
    <name type="scientific">Bacillus subtilis (strain 168)</name>
    <dbReference type="NCBI Taxonomy" id="224308"/>
    <lineage>
        <taxon>Bacteria</taxon>
        <taxon>Bacillati</taxon>
        <taxon>Bacillota</taxon>
        <taxon>Bacilli</taxon>
        <taxon>Bacillales</taxon>
        <taxon>Bacillaceae</taxon>
        <taxon>Bacillus</taxon>
    </lineage>
</organism>
<sequence length="164" mass="18809">MTCQSLIYQLIVLTGKKGWVLASFCSEEAEILYQLQGVNKVIGVKFEACTGISQSRLELLTLLYHADEISQSDLQKKVNIDSAAVTRHLKQLESKGMVSRRRKPEDNRITLVRLTDQGRERIESSKKEKERFMKEMLANVSAEERRLLIDVLARMRNNINNIEA</sequence>
<keyword id="KW-0238">DNA-binding</keyword>
<keyword id="KW-1185">Reference proteome</keyword>
<keyword id="KW-0804">Transcription</keyword>
<keyword id="KW-0805">Transcription regulation</keyword>
<proteinExistence type="predicted"/>
<protein>
    <recommendedName>
        <fullName>Uncharacterized HTH-type transcriptional regulator YdgJ</fullName>
    </recommendedName>
</protein>
<gene>
    <name type="primary">ydgJ</name>
    <name type="ordered locus">BSU05670</name>
</gene>
<evidence type="ECO:0000255" key="1">
    <source>
        <dbReference type="PROSITE-ProRule" id="PRU00345"/>
    </source>
</evidence>
<accession>P96708</accession>
<reference key="1">
    <citation type="submission" date="1997-03" db="EMBL/GenBank/DDBJ databases">
        <title>A 148 kbp sequence of the region between 35 and 47 degree of the Bacillus subtilis genome.</title>
        <authorList>
            <person name="Kasahara Y."/>
            <person name="Nakai S."/>
            <person name="Lee S."/>
            <person name="Sadaie Y."/>
            <person name="Ogasawara N."/>
        </authorList>
    </citation>
    <scope>NUCLEOTIDE SEQUENCE [GENOMIC DNA]</scope>
    <source>
        <strain>168</strain>
    </source>
</reference>
<reference key="2">
    <citation type="journal article" date="1997" name="Nature">
        <title>The complete genome sequence of the Gram-positive bacterium Bacillus subtilis.</title>
        <authorList>
            <person name="Kunst F."/>
            <person name="Ogasawara N."/>
            <person name="Moszer I."/>
            <person name="Albertini A.M."/>
            <person name="Alloni G."/>
            <person name="Azevedo V."/>
            <person name="Bertero M.G."/>
            <person name="Bessieres P."/>
            <person name="Bolotin A."/>
            <person name="Borchert S."/>
            <person name="Borriss R."/>
            <person name="Boursier L."/>
            <person name="Brans A."/>
            <person name="Braun M."/>
            <person name="Brignell S.C."/>
            <person name="Bron S."/>
            <person name="Brouillet S."/>
            <person name="Bruschi C.V."/>
            <person name="Caldwell B."/>
            <person name="Capuano V."/>
            <person name="Carter N.M."/>
            <person name="Choi S.-K."/>
            <person name="Codani J.-J."/>
            <person name="Connerton I.F."/>
            <person name="Cummings N.J."/>
            <person name="Daniel R.A."/>
            <person name="Denizot F."/>
            <person name="Devine K.M."/>
            <person name="Duesterhoeft A."/>
            <person name="Ehrlich S.D."/>
            <person name="Emmerson P.T."/>
            <person name="Entian K.-D."/>
            <person name="Errington J."/>
            <person name="Fabret C."/>
            <person name="Ferrari E."/>
            <person name="Foulger D."/>
            <person name="Fritz C."/>
            <person name="Fujita M."/>
            <person name="Fujita Y."/>
            <person name="Fuma S."/>
            <person name="Galizzi A."/>
            <person name="Galleron N."/>
            <person name="Ghim S.-Y."/>
            <person name="Glaser P."/>
            <person name="Goffeau A."/>
            <person name="Golightly E.J."/>
            <person name="Grandi G."/>
            <person name="Guiseppi G."/>
            <person name="Guy B.J."/>
            <person name="Haga K."/>
            <person name="Haiech J."/>
            <person name="Harwood C.R."/>
            <person name="Henaut A."/>
            <person name="Hilbert H."/>
            <person name="Holsappel S."/>
            <person name="Hosono S."/>
            <person name="Hullo M.-F."/>
            <person name="Itaya M."/>
            <person name="Jones L.-M."/>
            <person name="Joris B."/>
            <person name="Karamata D."/>
            <person name="Kasahara Y."/>
            <person name="Klaerr-Blanchard M."/>
            <person name="Klein C."/>
            <person name="Kobayashi Y."/>
            <person name="Koetter P."/>
            <person name="Koningstein G."/>
            <person name="Krogh S."/>
            <person name="Kumano M."/>
            <person name="Kurita K."/>
            <person name="Lapidus A."/>
            <person name="Lardinois S."/>
            <person name="Lauber J."/>
            <person name="Lazarevic V."/>
            <person name="Lee S.-M."/>
            <person name="Levine A."/>
            <person name="Liu H."/>
            <person name="Masuda S."/>
            <person name="Mauel C."/>
            <person name="Medigue C."/>
            <person name="Medina N."/>
            <person name="Mellado R.P."/>
            <person name="Mizuno M."/>
            <person name="Moestl D."/>
            <person name="Nakai S."/>
            <person name="Noback M."/>
            <person name="Noone D."/>
            <person name="O'Reilly M."/>
            <person name="Ogawa K."/>
            <person name="Ogiwara A."/>
            <person name="Oudega B."/>
            <person name="Park S.-H."/>
            <person name="Parro V."/>
            <person name="Pohl T.M."/>
            <person name="Portetelle D."/>
            <person name="Porwollik S."/>
            <person name="Prescott A.M."/>
            <person name="Presecan E."/>
            <person name="Pujic P."/>
            <person name="Purnelle B."/>
            <person name="Rapoport G."/>
            <person name="Rey M."/>
            <person name="Reynolds S."/>
            <person name="Rieger M."/>
            <person name="Rivolta C."/>
            <person name="Rocha E."/>
            <person name="Roche B."/>
            <person name="Rose M."/>
            <person name="Sadaie Y."/>
            <person name="Sato T."/>
            <person name="Scanlan E."/>
            <person name="Schleich S."/>
            <person name="Schroeter R."/>
            <person name="Scoffone F."/>
            <person name="Sekiguchi J."/>
            <person name="Sekowska A."/>
            <person name="Seror S.J."/>
            <person name="Serror P."/>
            <person name="Shin B.-S."/>
            <person name="Soldo B."/>
            <person name="Sorokin A."/>
            <person name="Tacconi E."/>
            <person name="Takagi T."/>
            <person name="Takahashi H."/>
            <person name="Takemaru K."/>
            <person name="Takeuchi M."/>
            <person name="Tamakoshi A."/>
            <person name="Tanaka T."/>
            <person name="Terpstra P."/>
            <person name="Tognoni A."/>
            <person name="Tosato V."/>
            <person name="Uchiyama S."/>
            <person name="Vandenbol M."/>
            <person name="Vannier F."/>
            <person name="Vassarotti A."/>
            <person name="Viari A."/>
            <person name="Wambutt R."/>
            <person name="Wedler E."/>
            <person name="Wedler H."/>
            <person name="Weitzenegger T."/>
            <person name="Winters P."/>
            <person name="Wipat A."/>
            <person name="Yamamoto H."/>
            <person name="Yamane K."/>
            <person name="Yasumoto K."/>
            <person name="Yata K."/>
            <person name="Yoshida K."/>
            <person name="Yoshikawa H.-F."/>
            <person name="Zumstein E."/>
            <person name="Yoshikawa H."/>
            <person name="Danchin A."/>
        </authorList>
    </citation>
    <scope>NUCLEOTIDE SEQUENCE [LARGE SCALE GENOMIC DNA]</scope>
    <source>
        <strain>168</strain>
    </source>
</reference>
<dbReference type="EMBL" id="AB001488">
    <property type="protein sequence ID" value="BAA19400.1"/>
    <property type="molecule type" value="Genomic_DNA"/>
</dbReference>
<dbReference type="EMBL" id="AL009126">
    <property type="protein sequence ID" value="CAB12386.1"/>
    <property type="molecule type" value="Genomic_DNA"/>
</dbReference>
<dbReference type="PIR" id="D69783">
    <property type="entry name" value="D69783"/>
</dbReference>
<dbReference type="RefSeq" id="NP_388448.1">
    <property type="nucleotide sequence ID" value="NC_000964.3"/>
</dbReference>
<dbReference type="RefSeq" id="WP_010886424.1">
    <property type="nucleotide sequence ID" value="NZ_OZ025638.1"/>
</dbReference>
<dbReference type="SMR" id="P96708"/>
<dbReference type="FunCoup" id="P96708">
    <property type="interactions" value="213"/>
</dbReference>
<dbReference type="STRING" id="224308.BSU05670"/>
<dbReference type="PaxDb" id="224308-BSU05670"/>
<dbReference type="EnsemblBacteria" id="CAB12386">
    <property type="protein sequence ID" value="CAB12386"/>
    <property type="gene ID" value="BSU_05670"/>
</dbReference>
<dbReference type="GeneID" id="938036"/>
<dbReference type="KEGG" id="bsu:BSU05670"/>
<dbReference type="PATRIC" id="fig|224308.43.peg.595"/>
<dbReference type="eggNOG" id="COG1846">
    <property type="taxonomic scope" value="Bacteria"/>
</dbReference>
<dbReference type="InParanoid" id="P96708"/>
<dbReference type="OrthoDB" id="2366010at2"/>
<dbReference type="PhylomeDB" id="P96708"/>
<dbReference type="BioCyc" id="BSUB:BSU05670-MONOMER"/>
<dbReference type="Proteomes" id="UP000001570">
    <property type="component" value="Chromosome"/>
</dbReference>
<dbReference type="GO" id="GO:0003677">
    <property type="term" value="F:DNA binding"/>
    <property type="evidence" value="ECO:0007669"/>
    <property type="project" value="UniProtKB-KW"/>
</dbReference>
<dbReference type="GO" id="GO:0003700">
    <property type="term" value="F:DNA-binding transcription factor activity"/>
    <property type="evidence" value="ECO:0007669"/>
    <property type="project" value="InterPro"/>
</dbReference>
<dbReference type="CDD" id="cd00090">
    <property type="entry name" value="HTH_ARSR"/>
    <property type="match status" value="1"/>
</dbReference>
<dbReference type="Gene3D" id="1.10.10.10">
    <property type="entry name" value="Winged helix-like DNA-binding domain superfamily/Winged helix DNA-binding domain"/>
    <property type="match status" value="1"/>
</dbReference>
<dbReference type="InterPro" id="IPR011991">
    <property type="entry name" value="ArsR-like_HTH"/>
</dbReference>
<dbReference type="InterPro" id="IPR001845">
    <property type="entry name" value="HTH_ArsR_DNA-bd_dom"/>
</dbReference>
<dbReference type="InterPro" id="IPR000835">
    <property type="entry name" value="HTH_MarR-typ"/>
</dbReference>
<dbReference type="InterPro" id="IPR036388">
    <property type="entry name" value="WH-like_DNA-bd_sf"/>
</dbReference>
<dbReference type="InterPro" id="IPR036390">
    <property type="entry name" value="WH_DNA-bd_sf"/>
</dbReference>
<dbReference type="PANTHER" id="PTHR42756">
    <property type="entry name" value="TRANSCRIPTIONAL REGULATOR, MARR"/>
    <property type="match status" value="1"/>
</dbReference>
<dbReference type="PANTHER" id="PTHR42756:SF1">
    <property type="entry name" value="TRANSCRIPTIONAL REPRESSOR OF EMRAB OPERON"/>
    <property type="match status" value="1"/>
</dbReference>
<dbReference type="Pfam" id="PF01047">
    <property type="entry name" value="MarR"/>
    <property type="match status" value="1"/>
</dbReference>
<dbReference type="PRINTS" id="PR00598">
    <property type="entry name" value="HTHMARR"/>
</dbReference>
<dbReference type="SMART" id="SM00418">
    <property type="entry name" value="HTH_ARSR"/>
    <property type="match status" value="1"/>
</dbReference>
<dbReference type="SMART" id="SM00347">
    <property type="entry name" value="HTH_MARR"/>
    <property type="match status" value="1"/>
</dbReference>
<dbReference type="SUPFAM" id="SSF46785">
    <property type="entry name" value="Winged helix' DNA-binding domain"/>
    <property type="match status" value="1"/>
</dbReference>
<dbReference type="PROSITE" id="PS50995">
    <property type="entry name" value="HTH_MARR_2"/>
    <property type="match status" value="1"/>
</dbReference>